<comment type="function">
    <text evidence="1 3">Plays a key role in the control of the eukaryotic cell cycle by modulating the centrosome cycle as well as mitotic onset; promotes G2-M transition via association with multiple interphase cyclins (By similarity). During G2 and early mitosis, CDC25A/B/C-mediated dephosphorylation activates CDK1/cyclin complexes which phosphorylate several substrates that trigger at least centrosome separation, Golgi dynamics, nuclear envelope breakdown and chromosome condensation. Once chromosomes are condensed and aligned at the metaphase plate, CDK1 activity is switched off by WEE1- and PKMYT1-mediated phosphorylation to allow sister chromatid separation, chromosome decondensation, reformation of the nuclear envelope and cytokinesis (By similarity). Catalyzes lamin (LMNA, LMNB1 and LMNB2) phosphorylation at the onset of mitosis, promoting nuclear envelope breakdown (By similarity).</text>
</comment>
<comment type="catalytic activity">
    <reaction evidence="1">
        <text>L-seryl-[protein] + ATP = O-phospho-L-seryl-[protein] + ADP + H(+)</text>
        <dbReference type="Rhea" id="RHEA:17989"/>
        <dbReference type="Rhea" id="RHEA-COMP:9863"/>
        <dbReference type="Rhea" id="RHEA-COMP:11604"/>
        <dbReference type="ChEBI" id="CHEBI:15378"/>
        <dbReference type="ChEBI" id="CHEBI:29999"/>
        <dbReference type="ChEBI" id="CHEBI:30616"/>
        <dbReference type="ChEBI" id="CHEBI:83421"/>
        <dbReference type="ChEBI" id="CHEBI:456216"/>
        <dbReference type="EC" id="2.7.11.22"/>
    </reaction>
</comment>
<comment type="catalytic activity">
    <reaction evidence="1">
        <text>L-threonyl-[protein] + ATP = O-phospho-L-threonyl-[protein] + ADP + H(+)</text>
        <dbReference type="Rhea" id="RHEA:46608"/>
        <dbReference type="Rhea" id="RHEA-COMP:11060"/>
        <dbReference type="Rhea" id="RHEA-COMP:11605"/>
        <dbReference type="ChEBI" id="CHEBI:15378"/>
        <dbReference type="ChEBI" id="CHEBI:30013"/>
        <dbReference type="ChEBI" id="CHEBI:30616"/>
        <dbReference type="ChEBI" id="CHEBI:61977"/>
        <dbReference type="ChEBI" id="CHEBI:456216"/>
        <dbReference type="EC" id="2.7.11.22"/>
    </reaction>
</comment>
<comment type="catalytic activity">
    <reaction evidence="2">
        <text>[DNA-directed RNA polymerase] + ATP = phospho-[DNA-directed RNA polymerase] + ADP + H(+)</text>
        <dbReference type="Rhea" id="RHEA:10216"/>
        <dbReference type="Rhea" id="RHEA-COMP:11321"/>
        <dbReference type="Rhea" id="RHEA-COMP:11322"/>
        <dbReference type="ChEBI" id="CHEBI:15378"/>
        <dbReference type="ChEBI" id="CHEBI:30616"/>
        <dbReference type="ChEBI" id="CHEBI:43176"/>
        <dbReference type="ChEBI" id="CHEBI:68546"/>
        <dbReference type="ChEBI" id="CHEBI:456216"/>
        <dbReference type="EC" id="2.7.11.23"/>
    </reaction>
</comment>
<comment type="activity regulation">
    <text evidence="1">Phosphorylation at Thr-14 or Tyr-15 inactivates the enzyme, while phosphorylation at Thr-161 activates it.</text>
</comment>
<comment type="subunit">
    <text evidence="6">Forms a stable but non-covalent complex with cyclin B in mature oocytes.</text>
</comment>
<comment type="subcellular location">
    <subcellularLocation>
        <location evidence="1">Nucleus</location>
    </subcellularLocation>
    <subcellularLocation>
        <location evidence="1">Cytoplasm</location>
        <location evidence="1">Cytoskeleton</location>
        <location evidence="1">Microtubule organizing center</location>
        <location evidence="1">Centrosome</location>
    </subcellularLocation>
</comment>
<comment type="PTM">
    <text evidence="1">Phosphorylation at Tyr-15 by wee1 and wee2 inhibits the protein kinase activity and acts negative regulator of entry into mitosis (G2 to M transition).</text>
</comment>
<comment type="similarity">
    <text evidence="7">Belongs to the protein kinase superfamily. CMGC Ser/Thr protein kinase family. CDC2/CDKX subfamily.</text>
</comment>
<reference key="1">
    <citation type="journal article" date="1993" name="Dev. Growth Differ.">
        <title>Isolation and characterization of goldfish cdc2, a catalytic component of maturation-promoting factor.</title>
        <authorList>
            <person name="Kajiura H."/>
            <person name="Yamashita M."/>
            <person name="Katsu Y."/>
            <person name="Nagahama Y."/>
        </authorList>
    </citation>
    <scope>NUCLEOTIDE SEQUENCE [MRNA]</scope>
    <scope>SUBUNIT</scope>
    <source>
        <tissue>Oocyte</tissue>
    </source>
</reference>
<keyword id="KW-0067">ATP-binding</keyword>
<keyword id="KW-0131">Cell cycle</keyword>
<keyword id="KW-0132">Cell division</keyword>
<keyword id="KW-0963">Cytoplasm</keyword>
<keyword id="KW-0206">Cytoskeleton</keyword>
<keyword id="KW-0418">Kinase</keyword>
<keyword id="KW-0498">Mitosis</keyword>
<keyword id="KW-0547">Nucleotide-binding</keyword>
<keyword id="KW-0539">Nucleus</keyword>
<keyword id="KW-0597">Phosphoprotein</keyword>
<keyword id="KW-1185">Reference proteome</keyword>
<keyword id="KW-0723">Serine/threonine-protein kinase</keyword>
<keyword id="KW-0808">Transferase</keyword>
<gene>
    <name type="primary">cdk1</name>
    <name type="synonym">cdc2</name>
</gene>
<accession>P51958</accession>
<proteinExistence type="evidence at protein level"/>
<sequence length="302" mass="34499">MDDYLKIEKIGEGTYGVVYKGRNKTTGQVVAMKKIRLESEEEGVPSTAVREISLLKELQHPNVVRLLDVLMQESKLYLVFEFLSMDLKKYLDSIPSGQFMDPMLVKSYLYQILEGILFCHCRRVLHRDLKPQNLLIDNKGVIKLADFGLARAFGVPVRVYTHEVVTLWYRAPEVLLGASRYSTPVDVWSIGTIFAELATKKPLFHGDSEIDQLFRIFRTLGTPNNEVWPDVESLPDYKNTFPKWKSGNLASTVKNLDKNGIDLLTKMLIYDPPKRISARQAMTHPYFDDLDKSTLPASNLKI</sequence>
<dbReference type="EC" id="2.7.11.22" evidence="1"/>
<dbReference type="EC" id="2.7.11.23" evidence="2"/>
<dbReference type="EMBL" id="D17758">
    <property type="protein sequence ID" value="BAA04605.1"/>
    <property type="molecule type" value="mRNA"/>
</dbReference>
<dbReference type="PIR" id="I50474">
    <property type="entry name" value="I50474"/>
</dbReference>
<dbReference type="SMR" id="P51958"/>
<dbReference type="OrthoDB" id="1732493at2759"/>
<dbReference type="Proteomes" id="UP000515129">
    <property type="component" value="Unplaced"/>
</dbReference>
<dbReference type="GO" id="GO:0005813">
    <property type="term" value="C:centrosome"/>
    <property type="evidence" value="ECO:0007669"/>
    <property type="project" value="UniProtKB-SubCell"/>
</dbReference>
<dbReference type="GO" id="GO:0005737">
    <property type="term" value="C:cytoplasm"/>
    <property type="evidence" value="ECO:0007669"/>
    <property type="project" value="UniProtKB-KW"/>
</dbReference>
<dbReference type="GO" id="GO:0005634">
    <property type="term" value="C:nucleus"/>
    <property type="evidence" value="ECO:0007669"/>
    <property type="project" value="UniProtKB-SubCell"/>
</dbReference>
<dbReference type="GO" id="GO:0005524">
    <property type="term" value="F:ATP binding"/>
    <property type="evidence" value="ECO:0007669"/>
    <property type="project" value="UniProtKB-KW"/>
</dbReference>
<dbReference type="GO" id="GO:0004693">
    <property type="term" value="F:cyclin-dependent protein serine/threonine kinase activity"/>
    <property type="evidence" value="ECO:0000250"/>
    <property type="project" value="UniProtKB"/>
</dbReference>
<dbReference type="GO" id="GO:0106310">
    <property type="term" value="F:protein serine kinase activity"/>
    <property type="evidence" value="ECO:0007669"/>
    <property type="project" value="RHEA"/>
</dbReference>
<dbReference type="GO" id="GO:0008353">
    <property type="term" value="F:RNA polymerase II CTD heptapeptide repeat kinase activity"/>
    <property type="evidence" value="ECO:0007669"/>
    <property type="project" value="UniProtKB-EC"/>
</dbReference>
<dbReference type="GO" id="GO:0051301">
    <property type="term" value="P:cell division"/>
    <property type="evidence" value="ECO:0007669"/>
    <property type="project" value="UniProtKB-KW"/>
</dbReference>
<dbReference type="GO" id="GO:0000086">
    <property type="term" value="P:G2/M transition of mitotic cell cycle"/>
    <property type="evidence" value="ECO:0000250"/>
    <property type="project" value="UniProtKB"/>
</dbReference>
<dbReference type="GO" id="GO:0007095">
    <property type="term" value="P:mitotic G2 DNA damage checkpoint signaling"/>
    <property type="evidence" value="ECO:0007669"/>
    <property type="project" value="TreeGrafter"/>
</dbReference>
<dbReference type="CDD" id="cd07861">
    <property type="entry name" value="STKc_CDK1_euk"/>
    <property type="match status" value="1"/>
</dbReference>
<dbReference type="FunFam" id="1.10.510.10:FF:000231">
    <property type="entry name" value="Cyclin-dependent kinase 1"/>
    <property type="match status" value="1"/>
</dbReference>
<dbReference type="FunFam" id="3.30.200.20:FF:000027">
    <property type="entry name" value="Putative Cyclin-dependent kinase 1"/>
    <property type="match status" value="1"/>
</dbReference>
<dbReference type="Gene3D" id="3.30.200.20">
    <property type="entry name" value="Phosphorylase Kinase, domain 1"/>
    <property type="match status" value="1"/>
</dbReference>
<dbReference type="Gene3D" id="1.10.510.10">
    <property type="entry name" value="Transferase(Phosphotransferase) domain 1"/>
    <property type="match status" value="1"/>
</dbReference>
<dbReference type="InterPro" id="IPR050108">
    <property type="entry name" value="CDK"/>
</dbReference>
<dbReference type="InterPro" id="IPR011009">
    <property type="entry name" value="Kinase-like_dom_sf"/>
</dbReference>
<dbReference type="InterPro" id="IPR000719">
    <property type="entry name" value="Prot_kinase_dom"/>
</dbReference>
<dbReference type="InterPro" id="IPR017441">
    <property type="entry name" value="Protein_kinase_ATP_BS"/>
</dbReference>
<dbReference type="InterPro" id="IPR008271">
    <property type="entry name" value="Ser/Thr_kinase_AS"/>
</dbReference>
<dbReference type="PANTHER" id="PTHR24056">
    <property type="entry name" value="CELL DIVISION PROTEIN KINASE"/>
    <property type="match status" value="1"/>
</dbReference>
<dbReference type="PANTHER" id="PTHR24056:SF334">
    <property type="entry name" value="CYCLIN-DEPENDENT KINASE 1"/>
    <property type="match status" value="1"/>
</dbReference>
<dbReference type="Pfam" id="PF00069">
    <property type="entry name" value="Pkinase"/>
    <property type="match status" value="1"/>
</dbReference>
<dbReference type="SMART" id="SM00220">
    <property type="entry name" value="S_TKc"/>
    <property type="match status" value="1"/>
</dbReference>
<dbReference type="SUPFAM" id="SSF56112">
    <property type="entry name" value="Protein kinase-like (PK-like)"/>
    <property type="match status" value="1"/>
</dbReference>
<dbReference type="PROSITE" id="PS00107">
    <property type="entry name" value="PROTEIN_KINASE_ATP"/>
    <property type="match status" value="1"/>
</dbReference>
<dbReference type="PROSITE" id="PS50011">
    <property type="entry name" value="PROTEIN_KINASE_DOM"/>
    <property type="match status" value="1"/>
</dbReference>
<dbReference type="PROSITE" id="PS00108">
    <property type="entry name" value="PROTEIN_KINASE_ST"/>
    <property type="match status" value="1"/>
</dbReference>
<evidence type="ECO:0000250" key="1">
    <source>
        <dbReference type="UniProtKB" id="P06493"/>
    </source>
</evidence>
<evidence type="ECO:0000250" key="2">
    <source>
        <dbReference type="UniProtKB" id="P11440"/>
    </source>
</evidence>
<evidence type="ECO:0000250" key="3">
    <source>
        <dbReference type="UniProtKB" id="P13863"/>
    </source>
</evidence>
<evidence type="ECO:0000255" key="4">
    <source>
        <dbReference type="PROSITE-ProRule" id="PRU00159"/>
    </source>
</evidence>
<evidence type="ECO:0000255" key="5">
    <source>
        <dbReference type="PROSITE-ProRule" id="PRU10027"/>
    </source>
</evidence>
<evidence type="ECO:0000269" key="6">
    <source ref="1"/>
</evidence>
<evidence type="ECO:0000305" key="7"/>
<protein>
    <recommendedName>
        <fullName>Cyclin-dependent kinase 1</fullName>
        <shortName>CDK1</shortName>
        <ecNumber evidence="1">2.7.11.22</ecNumber>
        <ecNumber evidence="2">2.7.11.23</ecNumber>
    </recommendedName>
    <alternativeName>
        <fullName>Cell division control protein 2 homolog</fullName>
    </alternativeName>
    <alternativeName>
        <fullName>Cell division protein kinase 1</fullName>
    </alternativeName>
    <alternativeName>
        <fullName>p34 protein kinase</fullName>
    </alternativeName>
</protein>
<feature type="chain" id="PRO_0000085729" description="Cyclin-dependent kinase 1">
    <location>
        <begin position="1"/>
        <end position="302"/>
    </location>
</feature>
<feature type="domain" description="Protein kinase" evidence="4">
    <location>
        <begin position="4"/>
        <end position="287"/>
    </location>
</feature>
<feature type="active site" description="Proton acceptor" evidence="4 5">
    <location>
        <position position="128"/>
    </location>
</feature>
<feature type="binding site" evidence="4">
    <location>
        <begin position="10"/>
        <end position="18"/>
    </location>
    <ligand>
        <name>ATP</name>
        <dbReference type="ChEBI" id="CHEBI:30616"/>
    </ligand>
</feature>
<feature type="binding site" evidence="4">
    <location>
        <position position="33"/>
    </location>
    <ligand>
        <name>ATP</name>
        <dbReference type="ChEBI" id="CHEBI:30616"/>
    </ligand>
</feature>
<feature type="modified residue" description="Phosphothreonine" evidence="1">
    <location>
        <position position="14"/>
    </location>
</feature>
<feature type="modified residue" description="Phosphotyrosine; by wee1 and wee2" evidence="1">
    <location>
        <position position="15"/>
    </location>
</feature>
<feature type="modified residue" description="Phosphothreonine; by cak" evidence="1">
    <location>
        <position position="161"/>
    </location>
</feature>
<name>CDK1_CARAU</name>
<organism>
    <name type="scientific">Carassius auratus</name>
    <name type="common">Goldfish</name>
    <dbReference type="NCBI Taxonomy" id="7957"/>
    <lineage>
        <taxon>Eukaryota</taxon>
        <taxon>Metazoa</taxon>
        <taxon>Chordata</taxon>
        <taxon>Craniata</taxon>
        <taxon>Vertebrata</taxon>
        <taxon>Euteleostomi</taxon>
        <taxon>Actinopterygii</taxon>
        <taxon>Neopterygii</taxon>
        <taxon>Teleostei</taxon>
        <taxon>Ostariophysi</taxon>
        <taxon>Cypriniformes</taxon>
        <taxon>Cyprinidae</taxon>
        <taxon>Cyprininae</taxon>
        <taxon>Carassius</taxon>
    </lineage>
</organism>